<reference key="1">
    <citation type="journal article" date="1995" name="Plant Cell">
        <title>AGL15, a MADS domain protein expressed in developing embryos.</title>
        <authorList>
            <person name="Heck G.R."/>
            <person name="Perry S.E."/>
            <person name="Nichols K.N."/>
            <person name="Fernandez D.E."/>
        </authorList>
    </citation>
    <scope>NUCLEOTIDE SEQUENCE [GENOMIC DNA]</scope>
    <source>
        <strain>cv. Bridger</strain>
    </source>
</reference>
<dbReference type="EMBL" id="U22665">
    <property type="protein sequence ID" value="AAA65654.1"/>
    <property type="molecule type" value="Genomic_DNA"/>
</dbReference>
<dbReference type="PIR" id="T07867">
    <property type="entry name" value="T07867"/>
</dbReference>
<dbReference type="SMR" id="Q39295"/>
<dbReference type="GO" id="GO:0005634">
    <property type="term" value="C:nucleus"/>
    <property type="evidence" value="ECO:0007669"/>
    <property type="project" value="UniProtKB-SubCell"/>
</dbReference>
<dbReference type="GO" id="GO:0003700">
    <property type="term" value="F:DNA-binding transcription factor activity"/>
    <property type="evidence" value="ECO:0007669"/>
    <property type="project" value="InterPro"/>
</dbReference>
<dbReference type="GO" id="GO:0046983">
    <property type="term" value="F:protein dimerization activity"/>
    <property type="evidence" value="ECO:0007669"/>
    <property type="project" value="InterPro"/>
</dbReference>
<dbReference type="GO" id="GO:0000977">
    <property type="term" value="F:RNA polymerase II transcription regulatory region sequence-specific DNA binding"/>
    <property type="evidence" value="ECO:0007669"/>
    <property type="project" value="InterPro"/>
</dbReference>
<dbReference type="GO" id="GO:0045944">
    <property type="term" value="P:positive regulation of transcription by RNA polymerase II"/>
    <property type="evidence" value="ECO:0007669"/>
    <property type="project" value="InterPro"/>
</dbReference>
<dbReference type="CDD" id="cd00265">
    <property type="entry name" value="MADS_MEF2_like"/>
    <property type="match status" value="1"/>
</dbReference>
<dbReference type="FunFam" id="3.40.1810.10:FF:000003">
    <property type="entry name" value="MADS-box transcription factor MADS-MC"/>
    <property type="match status" value="1"/>
</dbReference>
<dbReference type="Gene3D" id="3.40.1810.10">
    <property type="entry name" value="Transcription factor, MADS-box"/>
    <property type="match status" value="1"/>
</dbReference>
<dbReference type="InterPro" id="IPR050142">
    <property type="entry name" value="MADS-box/MEF2_TF"/>
</dbReference>
<dbReference type="InterPro" id="IPR033896">
    <property type="entry name" value="MEF2-like_N"/>
</dbReference>
<dbReference type="InterPro" id="IPR002487">
    <property type="entry name" value="TF_Kbox"/>
</dbReference>
<dbReference type="InterPro" id="IPR002100">
    <property type="entry name" value="TF_MADSbox"/>
</dbReference>
<dbReference type="InterPro" id="IPR036879">
    <property type="entry name" value="TF_MADSbox_sf"/>
</dbReference>
<dbReference type="PANTHER" id="PTHR48019">
    <property type="entry name" value="SERUM RESPONSE FACTOR HOMOLOG"/>
    <property type="match status" value="1"/>
</dbReference>
<dbReference type="Pfam" id="PF01486">
    <property type="entry name" value="K-box"/>
    <property type="match status" value="1"/>
</dbReference>
<dbReference type="Pfam" id="PF00319">
    <property type="entry name" value="SRF-TF"/>
    <property type="match status" value="1"/>
</dbReference>
<dbReference type="PRINTS" id="PR00404">
    <property type="entry name" value="MADSDOMAIN"/>
</dbReference>
<dbReference type="SMART" id="SM00432">
    <property type="entry name" value="MADS"/>
    <property type="match status" value="1"/>
</dbReference>
<dbReference type="SUPFAM" id="SSF55455">
    <property type="entry name" value="SRF-like"/>
    <property type="match status" value="1"/>
</dbReference>
<dbReference type="PROSITE" id="PS51297">
    <property type="entry name" value="K_BOX"/>
    <property type="match status" value="1"/>
</dbReference>
<dbReference type="PROSITE" id="PS00350">
    <property type="entry name" value="MADS_BOX_1"/>
    <property type="match status" value="1"/>
</dbReference>
<dbReference type="PROSITE" id="PS50066">
    <property type="entry name" value="MADS_BOX_2"/>
    <property type="match status" value="1"/>
</dbReference>
<protein>
    <recommendedName>
        <fullName>Agamous-like MADS-box protein AGL15</fullName>
    </recommendedName>
</protein>
<name>AGL15_BRANA</name>
<sequence>MGRGKIEIKRIENANSRQVTFSKRRAGLLKKAHELSVLCDAEVAVIVFSKSGKLFEFSSTSMKKTLLRYGNYQISSDVPGINCKTENQEECTEVDLLKDEISMLQEKHLHMQGKPLNLLSLKELQHLEKQLNFSLISVRERKELLLTKQLEESRLKEQRAELENETLRRQVQELRSFLPSINQHYAPSYIRCFAIDPKNSLLSNTCLGDINCSLQNTNSDTTLQLGLPGEAHDTRKNEGDRESPSSDSVTTSTTRATAQRISLV</sequence>
<evidence type="ECO:0000255" key="1">
    <source>
        <dbReference type="PROSITE-ProRule" id="PRU00251"/>
    </source>
</evidence>
<evidence type="ECO:0000255" key="2">
    <source>
        <dbReference type="PROSITE-ProRule" id="PRU00629"/>
    </source>
</evidence>
<evidence type="ECO:0000256" key="3">
    <source>
        <dbReference type="SAM" id="MobiDB-lite"/>
    </source>
</evidence>
<feature type="chain" id="PRO_0000199475" description="Agamous-like MADS-box protein AGL15">
    <location>
        <begin position="1"/>
        <end position="264"/>
    </location>
</feature>
<feature type="domain" description="MADS-box" evidence="1">
    <location>
        <begin position="3"/>
        <end position="57"/>
    </location>
</feature>
<feature type="domain" description="K-box" evidence="2">
    <location>
        <begin position="87"/>
        <end position="177"/>
    </location>
</feature>
<feature type="region of interest" description="Disordered" evidence="3">
    <location>
        <begin position="223"/>
        <end position="264"/>
    </location>
</feature>
<feature type="compositionally biased region" description="Basic and acidic residues" evidence="3">
    <location>
        <begin position="230"/>
        <end position="244"/>
    </location>
</feature>
<feature type="compositionally biased region" description="Low complexity" evidence="3">
    <location>
        <begin position="245"/>
        <end position="257"/>
    </location>
</feature>
<organism>
    <name type="scientific">Brassica napus</name>
    <name type="common">Rape</name>
    <dbReference type="NCBI Taxonomy" id="3708"/>
    <lineage>
        <taxon>Eukaryota</taxon>
        <taxon>Viridiplantae</taxon>
        <taxon>Streptophyta</taxon>
        <taxon>Embryophyta</taxon>
        <taxon>Tracheophyta</taxon>
        <taxon>Spermatophyta</taxon>
        <taxon>Magnoliopsida</taxon>
        <taxon>eudicotyledons</taxon>
        <taxon>Gunneridae</taxon>
        <taxon>Pentapetalae</taxon>
        <taxon>rosids</taxon>
        <taxon>malvids</taxon>
        <taxon>Brassicales</taxon>
        <taxon>Brassicaceae</taxon>
        <taxon>Brassiceae</taxon>
        <taxon>Brassica</taxon>
    </lineage>
</organism>
<keyword id="KW-0238">DNA-binding</keyword>
<keyword id="KW-0539">Nucleus</keyword>
<keyword id="KW-0804">Transcription</keyword>
<keyword id="KW-0805">Transcription regulation</keyword>
<accession>Q39295</accession>
<gene>
    <name type="primary">AGL15</name>
</gene>
<comment type="function">
    <text>Probable transcription factor.</text>
</comment>
<comment type="subcellular location">
    <subcellularLocation>
        <location evidence="1">Nucleus</location>
    </subcellularLocation>
</comment>
<proteinExistence type="inferred from homology"/>